<organism>
    <name type="scientific">Drosophila melanogaster</name>
    <name type="common">Fruit fly</name>
    <dbReference type="NCBI Taxonomy" id="7227"/>
    <lineage>
        <taxon>Eukaryota</taxon>
        <taxon>Metazoa</taxon>
        <taxon>Ecdysozoa</taxon>
        <taxon>Arthropoda</taxon>
        <taxon>Hexapoda</taxon>
        <taxon>Insecta</taxon>
        <taxon>Pterygota</taxon>
        <taxon>Neoptera</taxon>
        <taxon>Endopterygota</taxon>
        <taxon>Diptera</taxon>
        <taxon>Brachycera</taxon>
        <taxon>Muscomorpha</taxon>
        <taxon>Ephydroidea</taxon>
        <taxon>Drosophilidae</taxon>
        <taxon>Drosophila</taxon>
        <taxon>Sophophora</taxon>
    </lineage>
</organism>
<comment type="function">
    <text evidence="6">Required for the normal morphogenesis of a variety of polarized outgrowths including epidermal hairs, bristles, arista laterals, and dendrites.</text>
</comment>
<comment type="subunit">
    <text evidence="6">Interacts with and activates trc, also interacts with wts.</text>
</comment>
<comment type="subcellular location">
    <subcellularLocation>
        <location evidence="6">Cytoplasm</location>
    </subcellularLocation>
    <subcellularLocation>
        <location evidence="6">Nucleus</location>
    </subcellularLocation>
    <text evidence="6">Trc colocalizes with Mob1 to the cell periphery in wing cells and wing hairs.</text>
</comment>
<comment type="alternative products">
    <event type="alternative splicing"/>
    <isoform>
        <id>Q8IQG1-1</id>
        <name evidence="4">D</name>
        <sequence type="displayed"/>
    </isoform>
    <isoform>
        <id>Q8IQG1-2</id>
        <name evidence="4">A</name>
        <sequence type="described" ref="VSP_052339"/>
    </isoform>
    <isoform>
        <id>Q8IQG1-3</id>
        <name evidence="4">B</name>
        <sequence type="described" ref="VSP_052340"/>
    </isoform>
    <isoform>
        <id>Q8IQG1-4</id>
        <name evidence="4">C</name>
        <sequence type="described" ref="VSP_052341"/>
    </isoform>
</comment>
<comment type="RNA editing">
    <location>
        <position position="91" evidence="7"/>
    </location>
    <text evidence="7">Partially edited. Target of Adar.</text>
</comment>
<comment type="similarity">
    <text evidence="2">Belongs to the MOB1/phocein family.</text>
</comment>
<comment type="sequence caution" evidence="10">
    <conflict type="frameshift">
        <sequence resource="EMBL-CDS" id="AAN71631"/>
    </conflict>
</comment>
<comment type="sequence caution" evidence="10">
    <conflict type="frameshift">
        <sequence resource="EMBL-CDS" id="AAX33585"/>
    </conflict>
</comment>
<evidence type="ECO:0000250" key="1">
    <source>
        <dbReference type="UniProtKB" id="Q9H8S9"/>
    </source>
</evidence>
<evidence type="ECO:0000255" key="2"/>
<evidence type="ECO:0000256" key="3">
    <source>
        <dbReference type="SAM" id="MobiDB-lite"/>
    </source>
</evidence>
<evidence type="ECO:0000269" key="4">
    <source>
    </source>
</evidence>
<evidence type="ECO:0000269" key="5">
    <source>
    </source>
</evidence>
<evidence type="ECO:0000269" key="6">
    <source>
    </source>
</evidence>
<evidence type="ECO:0000269" key="7">
    <source>
    </source>
</evidence>
<evidence type="ECO:0000303" key="8">
    <source>
    </source>
</evidence>
<evidence type="ECO:0000303" key="9">
    <source ref="4"/>
</evidence>
<evidence type="ECO:0000305" key="10"/>
<evidence type="ECO:0000312" key="11">
    <source>
        <dbReference type="EMBL" id="AAN11874.2"/>
    </source>
</evidence>
<evidence type="ECO:0000312" key="12">
    <source>
        <dbReference type="EMBL" id="AAN71631.1"/>
    </source>
</evidence>
<evidence type="ECO:0000312" key="13">
    <source>
        <dbReference type="EMBL" id="AAX33585.1"/>
    </source>
</evidence>
<feature type="chain" id="PRO_0000279701" description="MOB kinase activator-like 2">
    <location>
        <begin position="1"/>
        <end position="566"/>
    </location>
</feature>
<feature type="region of interest" description="Disordered" evidence="3">
    <location>
        <begin position="28"/>
        <end position="57"/>
    </location>
</feature>
<feature type="region of interest" description="Disordered" evidence="3">
    <location>
        <begin position="74"/>
        <end position="118"/>
    </location>
</feature>
<feature type="region of interest" description="Disordered" evidence="3">
    <location>
        <begin position="346"/>
        <end position="407"/>
    </location>
</feature>
<feature type="region of interest" description="Disordered" evidence="3">
    <location>
        <begin position="498"/>
        <end position="541"/>
    </location>
</feature>
<feature type="compositionally biased region" description="Low complexity" evidence="3">
    <location>
        <begin position="35"/>
        <end position="57"/>
    </location>
</feature>
<feature type="compositionally biased region" description="Gly residues" evidence="3">
    <location>
        <begin position="85"/>
        <end position="115"/>
    </location>
</feature>
<feature type="compositionally biased region" description="Low complexity" evidence="3">
    <location>
        <begin position="367"/>
        <end position="388"/>
    </location>
</feature>
<feature type="compositionally biased region" description="Polar residues" evidence="3">
    <location>
        <begin position="394"/>
        <end position="407"/>
    </location>
</feature>
<feature type="compositionally biased region" description="Low complexity" evidence="3">
    <location>
        <begin position="498"/>
        <end position="507"/>
    </location>
</feature>
<feature type="compositionally biased region" description="Basic residues" evidence="3">
    <location>
        <begin position="508"/>
        <end position="526"/>
    </location>
</feature>
<feature type="binding site" evidence="1">
    <location>
        <position position="209"/>
    </location>
    <ligand>
        <name>Zn(2+)</name>
        <dbReference type="ChEBI" id="CHEBI:29105"/>
    </ligand>
</feature>
<feature type="binding site" evidence="1">
    <location>
        <position position="214"/>
    </location>
    <ligand>
        <name>Zn(2+)</name>
        <dbReference type="ChEBI" id="CHEBI:29105"/>
    </ligand>
</feature>
<feature type="binding site" evidence="1">
    <location>
        <position position="289"/>
    </location>
    <ligand>
        <name>Zn(2+)</name>
        <dbReference type="ChEBI" id="CHEBI:29105"/>
    </ligand>
</feature>
<feature type="binding site" evidence="1">
    <location>
        <position position="294"/>
    </location>
    <ligand>
        <name>Zn(2+)</name>
        <dbReference type="ChEBI" id="CHEBI:29105"/>
    </ligand>
</feature>
<feature type="splice variant" id="VSP_052339" description="In isoform A." evidence="8">
    <original>NWAISNLTGGNRVSRAILVRYSSVPLADATNDGSSTAPQTPTASTPRPSSSHSSLSSTFAATFLHASSRHIPGRAVPRQNANGQNGGKGNASGAGGGAGGGGAGGASGGTGGTGAQAAGQLSLPLDVEETVTCFCR</original>
    <variation>LRAPTQHIVQIGFGTKTTTTTTTTAAAAAATSTAAAATPGGKQQQQRKTLLQRFRQQQHKLPKVAAAEQTTHDTEYYFKQQQQQQTSSYQQGDNCLLYLATTLNSNSEQLLKKSKKKKESSSYNFAAALRRNKKPKQQQQQLATSTDDDDSCRSINSINSNCSNSSTSGSSHSLSNSCINNHNNTHYRNSKNTRHSSSNNNDYSGNYNCKTSEQQAWKASAAQQLLISDRNYPSSNTNNTNNNTNNITNSSNNNHSGGHIIMSPTSQAPTRTSLFDSCHRKIRLIGGGPVAFLGGLVA</variation>
    <location>
        <begin position="2"/>
        <end position="137"/>
    </location>
</feature>
<feature type="splice variant" id="VSP_052340" description="In isoform B." evidence="8">
    <original>NWAISNLTGGNRVSRAILVRYSSVPLADATNDGSSTAPQTPTASTPRPSSSHSSLSSTFAATFLHASSRHIPGRAVPRQNANGQNGGKGNASGAGGGAGGGGAGGASGGTGGTGAQAAGQLSLPLDVEETVTCFCR</original>
    <variation>KETLSSKVPTRIGVTFVSESDPKKKFKSSPSTSSSTISTATITSTTTTTTTTASPPPPQTSYVIKCLLKTARFMWQVTTIPSKIGDTIGTLYRYAQDSVDSFLCVAG</variation>
    <location>
        <begin position="2"/>
        <end position="137"/>
    </location>
</feature>
<feature type="splice variant" id="VSP_052341" description="In isoform C." evidence="8 9">
    <original>NWAISNLTGGNRVSRAILVRYSSVPLADATNDGSSTAPQTPTASTPRPSSSHSSLSSTFAATFLHASSRHIPGRAVPRQNANGQNGGKGNASGAGGGAGGGGAGGASGGTGGTGAQAAGQLSLPLDVEETVTCFCR</original>
    <variation>G</variation>
    <location>
        <begin position="2"/>
        <end position="137"/>
    </location>
</feature>
<feature type="sequence variant" description="In RNA edited version." evidence="7">
    <original>N</original>
    <variation>D</variation>
    <location>
        <position position="91"/>
    </location>
</feature>
<protein>
    <recommendedName>
        <fullName>MOB kinase activator-like 2</fullName>
    </recommendedName>
    <alternativeName>
        <fullName>Mob as tumor suppressor protein 2</fullName>
        <shortName>Dmob2</shortName>
    </alternativeName>
    <alternativeName>
        <fullName>Mps one binder kinase activator-like 2</fullName>
    </alternativeName>
</protein>
<proteinExistence type="evidence at protein level"/>
<sequence length="566" mass="58907">MNWAISNLTGGNRVSRAILVRYSSVPLADATNDGSSTAPQTPTASTPRPSSSHSSLSSTFAATFLHASSRHIPGRAVPRQNANGQNGGKGNASGAGGGAGGGGAGGASGGTGGTGAQAAGQLSLPLDVEETVTCFCRKARRKERDGDQNSTDTKLYLEESVLERKLPEADLKALVDLPAGLDYNEWLASHTLALFEHVNLVYGTISEFCTQSGCADMTGPGNRTYLWFDEKGKKTRVAAPQYIDYVMTFTQKTVSDESIFPTKYANEFPGSFESIARKILRLQFHVIAHLYAAHFREIALLGLHTHLNLTFAHLTALHRRFNLIDEKETDVLRDLEVALRLTDDTGGCQDATSTTSSVHDHSHSGDLQHQSLQQQQQHHNSSSNSTSSAEAFHVNSQSNNGSTSASASVSLIDGDAVAPPICTQPEAGAGCKPAGSSGLLGGILGDLTSGEFGDTTRYCTSAVPQAAAAAGAGVGGTAIGATDAAALNNGAGALHLNFSNNNNNNHNLNHHHHHHHHHGHHGHHHAAQQQQQHSGLIQCNAAGGGGNATGVATGGATAAASSTTTA</sequence>
<accession>Q8IQG1</accession>
<accession>Q5BHY7</accession>
<accession>Q8IGB4</accession>
<accession>Q8IQG2</accession>
<accession>Q9VTJ6</accession>
<accession>Q9VTJ7</accession>
<dbReference type="EMBL" id="AE014296">
    <property type="protein sequence ID" value="AAF50051.1"/>
    <property type="molecule type" value="Genomic_DNA"/>
</dbReference>
<dbReference type="EMBL" id="AE014296">
    <property type="protein sequence ID" value="AAF50052.1"/>
    <property type="molecule type" value="Genomic_DNA"/>
</dbReference>
<dbReference type="EMBL" id="AE014296">
    <property type="protein sequence ID" value="AAN11873.1"/>
    <property type="molecule type" value="Genomic_DNA"/>
</dbReference>
<dbReference type="EMBL" id="AE014296">
    <property type="protein sequence ID" value="AAN11874.2"/>
    <property type="molecule type" value="Genomic_DNA"/>
</dbReference>
<dbReference type="EMBL" id="BT001864">
    <property type="protein sequence ID" value="AAN71631.1"/>
    <property type="status" value="ALT_FRAME"/>
    <property type="molecule type" value="mRNA"/>
</dbReference>
<dbReference type="EMBL" id="BT021437">
    <property type="protein sequence ID" value="AAX33585.1"/>
    <property type="status" value="ALT_SEQ"/>
    <property type="molecule type" value="mRNA"/>
</dbReference>
<dbReference type="RefSeq" id="NP_001261713.1">
    <molecule id="Q8IQG1-3"/>
    <property type="nucleotide sequence ID" value="NM_001274784.1"/>
</dbReference>
<dbReference type="RefSeq" id="NP_648474.1">
    <molecule id="Q8IQG1-4"/>
    <property type="nucleotide sequence ID" value="NM_140217.2"/>
</dbReference>
<dbReference type="RefSeq" id="NP_729714.1">
    <molecule id="Q8IQG1-1"/>
    <property type="nucleotide sequence ID" value="NM_168460.2"/>
</dbReference>
<dbReference type="RefSeq" id="NP_729715.2">
    <molecule id="Q8IQG1-2"/>
    <property type="nucleotide sequence ID" value="NM_168461.2"/>
</dbReference>
<dbReference type="RefSeq" id="NP_729716.1">
    <molecule id="Q8IQG1-3"/>
    <property type="nucleotide sequence ID" value="NM_168462.2"/>
</dbReference>
<dbReference type="SMR" id="Q8IQG1"/>
<dbReference type="BioGRID" id="64660">
    <property type="interactions" value="37"/>
</dbReference>
<dbReference type="FunCoup" id="Q8IQG1">
    <property type="interactions" value="62"/>
</dbReference>
<dbReference type="IntAct" id="Q8IQG1">
    <property type="interactions" value="9"/>
</dbReference>
<dbReference type="STRING" id="7227.FBpp0088371"/>
<dbReference type="PaxDb" id="7227-FBpp0088371"/>
<dbReference type="DNASU" id="39293"/>
<dbReference type="EnsemblMetazoa" id="FBtr0089330">
    <molecule id="Q8IQG1-4"/>
    <property type="protein sequence ID" value="FBpp0088369"/>
    <property type="gene ID" value="FBgn0259481"/>
</dbReference>
<dbReference type="EnsemblMetazoa" id="FBtr0089331">
    <molecule id="Q8IQG1-1"/>
    <property type="protein sequence ID" value="FBpp0088370"/>
    <property type="gene ID" value="FBgn0259481"/>
</dbReference>
<dbReference type="EnsemblMetazoa" id="FBtr0089332">
    <molecule id="Q8IQG1-2"/>
    <property type="protein sequence ID" value="FBpp0088371"/>
    <property type="gene ID" value="FBgn0259481"/>
</dbReference>
<dbReference type="EnsemblMetazoa" id="FBtr0089333">
    <molecule id="Q8IQG1-3"/>
    <property type="protein sequence ID" value="FBpp0088372"/>
    <property type="gene ID" value="FBgn0259481"/>
</dbReference>
<dbReference type="EnsemblMetazoa" id="FBtr0333217">
    <molecule id="Q8IQG1-3"/>
    <property type="protein sequence ID" value="FBpp0305419"/>
    <property type="gene ID" value="FBgn0259481"/>
</dbReference>
<dbReference type="GeneID" id="39293"/>
<dbReference type="KEGG" id="dme:Dmel_CG11711"/>
<dbReference type="UCSC" id="CG11711-RA">
    <molecule id="Q8IQG1-1"/>
    <property type="organism name" value="d. melanogaster"/>
</dbReference>
<dbReference type="AGR" id="FB:FBgn0259481"/>
<dbReference type="CTD" id="81532"/>
<dbReference type="FlyBase" id="FBgn0259481">
    <property type="gene designation" value="Mob2"/>
</dbReference>
<dbReference type="VEuPathDB" id="VectorBase:FBgn0259481"/>
<dbReference type="eggNOG" id="KOG0440">
    <property type="taxonomic scope" value="Eukaryota"/>
</dbReference>
<dbReference type="InParanoid" id="Q8IQG1"/>
<dbReference type="OMA" id="MYLWFDE"/>
<dbReference type="OrthoDB" id="8170117at2759"/>
<dbReference type="SignaLink" id="Q8IQG1"/>
<dbReference type="BioGRID-ORCS" id="39293">
    <property type="hits" value="0 hits in 1 CRISPR screen"/>
</dbReference>
<dbReference type="ChiTaRS" id="Mob2">
    <property type="organism name" value="fly"/>
</dbReference>
<dbReference type="GenomeRNAi" id="39293"/>
<dbReference type="PRO" id="PR:Q8IQG1"/>
<dbReference type="Proteomes" id="UP000000803">
    <property type="component" value="Chromosome 3L"/>
</dbReference>
<dbReference type="Bgee" id="FBgn0259481">
    <property type="expression patterns" value="Expressed in outer photoreceptor cell (Drosophila) in insect head and 274 other cell types or tissues"/>
</dbReference>
<dbReference type="ExpressionAtlas" id="Q8IQG1">
    <property type="expression patterns" value="baseline and differential"/>
</dbReference>
<dbReference type="GO" id="GO:0070451">
    <property type="term" value="C:cell hair"/>
    <property type="evidence" value="ECO:0000314"/>
    <property type="project" value="FlyBase"/>
</dbReference>
<dbReference type="GO" id="GO:0071944">
    <property type="term" value="C:cell periphery"/>
    <property type="evidence" value="ECO:0000314"/>
    <property type="project" value="FlyBase"/>
</dbReference>
<dbReference type="GO" id="GO:0005737">
    <property type="term" value="C:cytoplasm"/>
    <property type="evidence" value="ECO:0000314"/>
    <property type="project" value="UniProtKB"/>
</dbReference>
<dbReference type="GO" id="GO:0005634">
    <property type="term" value="C:nucleus"/>
    <property type="evidence" value="ECO:0000318"/>
    <property type="project" value="GO_Central"/>
</dbReference>
<dbReference type="GO" id="GO:0005886">
    <property type="term" value="C:plasma membrane"/>
    <property type="evidence" value="ECO:0000314"/>
    <property type="project" value="FlyBase"/>
</dbReference>
<dbReference type="GO" id="GO:0016028">
    <property type="term" value="C:rhabdomere"/>
    <property type="evidence" value="ECO:0000314"/>
    <property type="project" value="FlyBase"/>
</dbReference>
<dbReference type="GO" id="GO:0046872">
    <property type="term" value="F:metal ion binding"/>
    <property type="evidence" value="ECO:0007669"/>
    <property type="project" value="UniProtKB-KW"/>
</dbReference>
<dbReference type="GO" id="GO:0030295">
    <property type="term" value="F:protein kinase activator activity"/>
    <property type="evidence" value="ECO:0000318"/>
    <property type="project" value="GO_Central"/>
</dbReference>
<dbReference type="GO" id="GO:0019901">
    <property type="term" value="F:protein kinase binding"/>
    <property type="evidence" value="ECO:0000353"/>
    <property type="project" value="FlyBase"/>
</dbReference>
<dbReference type="GO" id="GO:0000902">
    <property type="term" value="P:cell morphogenesis"/>
    <property type="evidence" value="ECO:0000315"/>
    <property type="project" value="UniProtKB"/>
</dbReference>
<dbReference type="GO" id="GO:0007616">
    <property type="term" value="P:long-term memory"/>
    <property type="evidence" value="ECO:0000315"/>
    <property type="project" value="FlyBase"/>
</dbReference>
<dbReference type="GO" id="GO:0045886">
    <property type="term" value="P:negative regulation of synaptic assembly at neuromuscular junction"/>
    <property type="evidence" value="ECO:0000315"/>
    <property type="project" value="FlyBase"/>
</dbReference>
<dbReference type="GO" id="GO:0042052">
    <property type="term" value="P:rhabdomere development"/>
    <property type="evidence" value="ECO:0000315"/>
    <property type="project" value="FlyBase"/>
</dbReference>
<dbReference type="GO" id="GO:0007165">
    <property type="term" value="P:signal transduction"/>
    <property type="evidence" value="ECO:0000318"/>
    <property type="project" value="GO_Central"/>
</dbReference>
<dbReference type="FunFam" id="1.20.140.30:FF:000003">
    <property type="entry name" value="MOB kinase activator 2"/>
    <property type="match status" value="1"/>
</dbReference>
<dbReference type="Gene3D" id="1.20.140.30">
    <property type="entry name" value="MOB kinase activator"/>
    <property type="match status" value="1"/>
</dbReference>
<dbReference type="InterPro" id="IPR005301">
    <property type="entry name" value="MOB_kinase_act_fam"/>
</dbReference>
<dbReference type="InterPro" id="IPR036703">
    <property type="entry name" value="MOB_kinase_act_sf"/>
</dbReference>
<dbReference type="PANTHER" id="PTHR22599">
    <property type="entry name" value="MPS ONE BINDER KINASE ACTIVATOR-LIKE MOB"/>
    <property type="match status" value="1"/>
</dbReference>
<dbReference type="Pfam" id="PF03637">
    <property type="entry name" value="Mob1_phocein"/>
    <property type="match status" value="1"/>
</dbReference>
<dbReference type="SMART" id="SM01388">
    <property type="entry name" value="Mob1_phocein"/>
    <property type="match status" value="1"/>
</dbReference>
<dbReference type="SUPFAM" id="SSF101152">
    <property type="entry name" value="Mob1/phocein"/>
    <property type="match status" value="1"/>
</dbReference>
<name>MOB2_DROME</name>
<keyword id="KW-0025">Alternative splicing</keyword>
<keyword id="KW-0963">Cytoplasm</keyword>
<keyword id="KW-0479">Metal-binding</keyword>
<keyword id="KW-0539">Nucleus</keyword>
<keyword id="KW-1185">Reference proteome</keyword>
<keyword id="KW-0691">RNA editing</keyword>
<keyword id="KW-0862">Zinc</keyword>
<reference evidence="11" key="1">
    <citation type="journal article" date="2000" name="Science">
        <title>The genome sequence of Drosophila melanogaster.</title>
        <authorList>
            <person name="Adams M.D."/>
            <person name="Celniker S.E."/>
            <person name="Holt R.A."/>
            <person name="Evans C.A."/>
            <person name="Gocayne J.D."/>
            <person name="Amanatides P.G."/>
            <person name="Scherer S.E."/>
            <person name="Li P.W."/>
            <person name="Hoskins R.A."/>
            <person name="Galle R.F."/>
            <person name="George R.A."/>
            <person name="Lewis S.E."/>
            <person name="Richards S."/>
            <person name="Ashburner M."/>
            <person name="Henderson S.N."/>
            <person name="Sutton G.G."/>
            <person name="Wortman J.R."/>
            <person name="Yandell M.D."/>
            <person name="Zhang Q."/>
            <person name="Chen L.X."/>
            <person name="Brandon R.C."/>
            <person name="Rogers Y.-H.C."/>
            <person name="Blazej R.G."/>
            <person name="Champe M."/>
            <person name="Pfeiffer B.D."/>
            <person name="Wan K.H."/>
            <person name="Doyle C."/>
            <person name="Baxter E.G."/>
            <person name="Helt G."/>
            <person name="Nelson C.R."/>
            <person name="Miklos G.L.G."/>
            <person name="Abril J.F."/>
            <person name="Agbayani A."/>
            <person name="An H.-J."/>
            <person name="Andrews-Pfannkoch C."/>
            <person name="Baldwin D."/>
            <person name="Ballew R.M."/>
            <person name="Basu A."/>
            <person name="Baxendale J."/>
            <person name="Bayraktaroglu L."/>
            <person name="Beasley E.M."/>
            <person name="Beeson K.Y."/>
            <person name="Benos P.V."/>
            <person name="Berman B.P."/>
            <person name="Bhandari D."/>
            <person name="Bolshakov S."/>
            <person name="Borkova D."/>
            <person name="Botchan M.R."/>
            <person name="Bouck J."/>
            <person name="Brokstein P."/>
            <person name="Brottier P."/>
            <person name="Burtis K.C."/>
            <person name="Busam D.A."/>
            <person name="Butler H."/>
            <person name="Cadieu E."/>
            <person name="Center A."/>
            <person name="Chandra I."/>
            <person name="Cherry J.M."/>
            <person name="Cawley S."/>
            <person name="Dahlke C."/>
            <person name="Davenport L.B."/>
            <person name="Davies P."/>
            <person name="de Pablos B."/>
            <person name="Delcher A."/>
            <person name="Deng Z."/>
            <person name="Mays A.D."/>
            <person name="Dew I."/>
            <person name="Dietz S.M."/>
            <person name="Dodson K."/>
            <person name="Doup L.E."/>
            <person name="Downes M."/>
            <person name="Dugan-Rocha S."/>
            <person name="Dunkov B.C."/>
            <person name="Dunn P."/>
            <person name="Durbin K.J."/>
            <person name="Evangelista C.C."/>
            <person name="Ferraz C."/>
            <person name="Ferriera S."/>
            <person name="Fleischmann W."/>
            <person name="Fosler C."/>
            <person name="Gabrielian A.E."/>
            <person name="Garg N.S."/>
            <person name="Gelbart W.M."/>
            <person name="Glasser K."/>
            <person name="Glodek A."/>
            <person name="Gong F."/>
            <person name="Gorrell J.H."/>
            <person name="Gu Z."/>
            <person name="Guan P."/>
            <person name="Harris M."/>
            <person name="Harris N.L."/>
            <person name="Harvey D.A."/>
            <person name="Heiman T.J."/>
            <person name="Hernandez J.R."/>
            <person name="Houck J."/>
            <person name="Hostin D."/>
            <person name="Houston K.A."/>
            <person name="Howland T.J."/>
            <person name="Wei M.-H."/>
            <person name="Ibegwam C."/>
            <person name="Jalali M."/>
            <person name="Kalush F."/>
            <person name="Karpen G.H."/>
            <person name="Ke Z."/>
            <person name="Kennison J.A."/>
            <person name="Ketchum K.A."/>
            <person name="Kimmel B.E."/>
            <person name="Kodira C.D."/>
            <person name="Kraft C.L."/>
            <person name="Kravitz S."/>
            <person name="Kulp D."/>
            <person name="Lai Z."/>
            <person name="Lasko P."/>
            <person name="Lei Y."/>
            <person name="Levitsky A.A."/>
            <person name="Li J.H."/>
            <person name="Li Z."/>
            <person name="Liang Y."/>
            <person name="Lin X."/>
            <person name="Liu X."/>
            <person name="Mattei B."/>
            <person name="McIntosh T.C."/>
            <person name="McLeod M.P."/>
            <person name="McPherson D."/>
            <person name="Merkulov G."/>
            <person name="Milshina N.V."/>
            <person name="Mobarry C."/>
            <person name="Morris J."/>
            <person name="Moshrefi A."/>
            <person name="Mount S.M."/>
            <person name="Moy M."/>
            <person name="Murphy B."/>
            <person name="Murphy L."/>
            <person name="Muzny D.M."/>
            <person name="Nelson D.L."/>
            <person name="Nelson D.R."/>
            <person name="Nelson K.A."/>
            <person name="Nixon K."/>
            <person name="Nusskern D.R."/>
            <person name="Pacleb J.M."/>
            <person name="Palazzolo M."/>
            <person name="Pittman G.S."/>
            <person name="Pan S."/>
            <person name="Pollard J."/>
            <person name="Puri V."/>
            <person name="Reese M.G."/>
            <person name="Reinert K."/>
            <person name="Remington K."/>
            <person name="Saunders R.D.C."/>
            <person name="Scheeler F."/>
            <person name="Shen H."/>
            <person name="Shue B.C."/>
            <person name="Siden-Kiamos I."/>
            <person name="Simpson M."/>
            <person name="Skupski M.P."/>
            <person name="Smith T.J."/>
            <person name="Spier E."/>
            <person name="Spradling A.C."/>
            <person name="Stapleton M."/>
            <person name="Strong R."/>
            <person name="Sun E."/>
            <person name="Svirskas R."/>
            <person name="Tector C."/>
            <person name="Turner R."/>
            <person name="Venter E."/>
            <person name="Wang A.H."/>
            <person name="Wang X."/>
            <person name="Wang Z.-Y."/>
            <person name="Wassarman D.A."/>
            <person name="Weinstock G.M."/>
            <person name="Weissenbach J."/>
            <person name="Williams S.M."/>
            <person name="Woodage T."/>
            <person name="Worley K.C."/>
            <person name="Wu D."/>
            <person name="Yang S."/>
            <person name="Yao Q.A."/>
            <person name="Ye J."/>
            <person name="Yeh R.-F."/>
            <person name="Zaveri J.S."/>
            <person name="Zhan M."/>
            <person name="Zhang G."/>
            <person name="Zhao Q."/>
            <person name="Zheng L."/>
            <person name="Zheng X.H."/>
            <person name="Zhong F.N."/>
            <person name="Zhong W."/>
            <person name="Zhou X."/>
            <person name="Zhu S.C."/>
            <person name="Zhu X."/>
            <person name="Smith H.O."/>
            <person name="Gibbs R.A."/>
            <person name="Myers E.W."/>
            <person name="Rubin G.M."/>
            <person name="Venter J.C."/>
        </authorList>
    </citation>
    <scope>NUCLEOTIDE SEQUENCE [LARGE SCALE GENOMIC DNA]</scope>
    <source>
        <strain evidence="4">Berkeley</strain>
    </source>
</reference>
<reference evidence="10 11" key="2">
    <citation type="journal article" date="2002" name="Genome Biol.">
        <title>Annotation of the Drosophila melanogaster euchromatic genome: a systematic review.</title>
        <authorList>
            <person name="Misra S."/>
            <person name="Crosby M.A."/>
            <person name="Mungall C.J."/>
            <person name="Matthews B.B."/>
            <person name="Campbell K.S."/>
            <person name="Hradecky P."/>
            <person name="Huang Y."/>
            <person name="Kaminker J.S."/>
            <person name="Millburn G.H."/>
            <person name="Prochnik S.E."/>
            <person name="Smith C.D."/>
            <person name="Tupy J.L."/>
            <person name="Whitfield E.J."/>
            <person name="Bayraktaroglu L."/>
            <person name="Berman B.P."/>
            <person name="Bettencourt B.R."/>
            <person name="Celniker S.E."/>
            <person name="de Grey A.D.N.J."/>
            <person name="Drysdale R.A."/>
            <person name="Harris N.L."/>
            <person name="Richter J."/>
            <person name="Russo S."/>
            <person name="Schroeder A.J."/>
            <person name="Shu S.Q."/>
            <person name="Stapleton M."/>
            <person name="Yamada C."/>
            <person name="Ashburner M."/>
            <person name="Gelbart W.M."/>
            <person name="Rubin G.M."/>
            <person name="Lewis S.E."/>
        </authorList>
    </citation>
    <scope>GENOME REANNOTATION</scope>
    <scope>ALTERNATIVE SPLICING</scope>
    <source>
        <strain>Berkeley</strain>
    </source>
</reference>
<reference evidence="10 12" key="3">
    <citation type="journal article" date="2002" name="Genome Biol.">
        <title>A Drosophila full-length cDNA resource.</title>
        <authorList>
            <person name="Stapleton M."/>
            <person name="Carlson J.W."/>
            <person name="Brokstein P."/>
            <person name="Yu C."/>
            <person name="Champe M."/>
            <person name="George R.A."/>
            <person name="Guarin H."/>
            <person name="Kronmiller B."/>
            <person name="Pacleb J.M."/>
            <person name="Park S."/>
            <person name="Wan K.H."/>
            <person name="Rubin G.M."/>
            <person name="Celniker S.E."/>
        </authorList>
    </citation>
    <scope>NUCLEOTIDE SEQUENCE [LARGE SCALE MRNA] (ISOFORM D)</scope>
    <source>
        <strain evidence="12">Berkeley</strain>
        <tissue evidence="5">Head</tissue>
    </source>
</reference>
<reference evidence="10 13" key="4">
    <citation type="submission" date="2005-03" db="EMBL/GenBank/DDBJ databases">
        <authorList>
            <person name="Stapleton M."/>
            <person name="Carlson J.W."/>
            <person name="Chavez C."/>
            <person name="Frise E."/>
            <person name="George R.A."/>
            <person name="Pacleb J.M."/>
            <person name="Park S."/>
            <person name="Wan K.H."/>
            <person name="Yu C."/>
            <person name="Rubin G.M."/>
            <person name="Celniker S.E."/>
        </authorList>
    </citation>
    <scope>NUCLEOTIDE SEQUENCE [LARGE SCALE MRNA] (ISOFORM C)</scope>
    <source>
        <strain evidence="13">Berkeley</strain>
        <tissue>Head</tissue>
    </source>
</reference>
<reference evidence="10" key="5">
    <citation type="journal article" date="2005" name="Mol. Biol. Cell">
        <title>Drosophila Mob family proteins interact with the related tricornered (Trc) and warts (Wts) kinases.</title>
        <authorList>
            <person name="He Y."/>
            <person name="Emoto K."/>
            <person name="Fang X."/>
            <person name="Ren N."/>
            <person name="Tian X."/>
            <person name="Jan Y.-N."/>
            <person name="Adler P.N."/>
        </authorList>
    </citation>
    <scope>FUNCTION</scope>
    <scope>INTERACTION WITH TRC</scope>
    <scope>SUBCELLULAR LOCATION</scope>
</reference>
<reference evidence="10" key="6">
    <citation type="journal article" date="2006" name="RNA">
        <title>RNA editing in Drosophila melanogaster: new targets and functional consequences.</title>
        <authorList>
            <person name="Stapleton M."/>
            <person name="Carlson J.W."/>
            <person name="Celniker S.E."/>
        </authorList>
    </citation>
    <scope>RNA EDITING OF POSITION 91</scope>
</reference>
<gene>
    <name type="primary">Mob2</name>
    <name type="ORF">CG11711</name>
</gene>